<name>HSF_XENLA</name>
<sequence length="451" mass="49473">MDPHGTCGGSNVPAFLAKLWTLVEDPDTDPLICWSPEGNSFHVFDQGQFAKEVLPKYFKHNNMASFVRQLNMYGFRKVVHIEQGGLVKPERDDTEFQHPYFIRGQEQLLENIKRKVNTMSATKSDEVKVRQDSVGKLISDVQSMKGKQESIDGRLLSMKHENEALWREVASLRQKHTQQQKVVNKLIQFLVSLVQSNRILGVKRKIPLMLNDSSTGHSPPKYSRQYSLEHVPSSTSYPVSGFTDSSAGPIISDVTELPESSPSPSPCPSLEASPSPVILIKTEPLTPSQSPEQSPAPPKLDDTPISPSTFIDSILLETETSVCPGGNKNDEMSESHPPEPCLSVACLDNISLSRQMSEVSRLFPTSCSSVPGRAEPPGLDMAVAELNDHVDNIDFNLDTLQNLLNGQSFSVDTSALMDLFSPSLGIPDLSLPDPDSSLASVSSTPIYTCVV</sequence>
<evidence type="ECO:0000250" key="1"/>
<evidence type="ECO:0000256" key="2">
    <source>
        <dbReference type="SAM" id="MobiDB-lite"/>
    </source>
</evidence>
<evidence type="ECO:0000305" key="3"/>
<reference key="1">
    <citation type="journal article" date="1995" name="Gene">
        <title>The cDNA encoding Xenopus laevis heat-shock factor 1 (XHSF1): nucleotide and deduced amino-acid sequences, and properties of the encoded protein.</title>
        <authorList>
            <person name="Stump D.G."/>
            <person name="Landsberger N."/>
            <person name="Wolffe A.P."/>
        </authorList>
    </citation>
    <scope>NUCLEOTIDE SEQUENCE [MRNA]</scope>
</reference>
<gene>
    <name type="primary">hsf1</name>
    <name type="synonym">hsf</name>
</gene>
<feature type="chain" id="PRO_0000124577" description="Heat shock factor protein">
    <location>
        <begin position="1"/>
        <end position="451"/>
    </location>
</feature>
<feature type="DNA-binding region" evidence="1">
    <location>
        <begin position="12"/>
        <end position="117"/>
    </location>
</feature>
<feature type="region of interest" description="Disordered" evidence="2">
    <location>
        <begin position="210"/>
        <end position="273"/>
    </location>
</feature>
<feature type="region of interest" description="Disordered" evidence="2">
    <location>
        <begin position="285"/>
        <end position="307"/>
    </location>
</feature>
<feature type="compositionally biased region" description="Polar residues" evidence="2">
    <location>
        <begin position="232"/>
        <end position="246"/>
    </location>
</feature>
<organism>
    <name type="scientific">Xenopus laevis</name>
    <name type="common">African clawed frog</name>
    <dbReference type="NCBI Taxonomy" id="8355"/>
    <lineage>
        <taxon>Eukaryota</taxon>
        <taxon>Metazoa</taxon>
        <taxon>Chordata</taxon>
        <taxon>Craniata</taxon>
        <taxon>Vertebrata</taxon>
        <taxon>Euteleostomi</taxon>
        <taxon>Amphibia</taxon>
        <taxon>Batrachia</taxon>
        <taxon>Anura</taxon>
        <taxon>Pipoidea</taxon>
        <taxon>Pipidae</taxon>
        <taxon>Xenopodinae</taxon>
        <taxon>Xenopus</taxon>
        <taxon>Xenopus</taxon>
    </lineage>
</organism>
<proteinExistence type="evidence at transcript level"/>
<keyword id="KW-0010">Activator</keyword>
<keyword id="KW-0238">DNA-binding</keyword>
<keyword id="KW-0539">Nucleus</keyword>
<keyword id="KW-0597">Phosphoprotein</keyword>
<keyword id="KW-1185">Reference proteome</keyword>
<keyword id="KW-0346">Stress response</keyword>
<keyword id="KW-0804">Transcription</keyword>
<keyword id="KW-0805">Transcription regulation</keyword>
<accession>P41154</accession>
<dbReference type="EMBL" id="L36924">
    <property type="protein sequence ID" value="AAA99999.1"/>
    <property type="molecule type" value="mRNA"/>
</dbReference>
<dbReference type="PIR" id="JC4199">
    <property type="entry name" value="JC4199"/>
</dbReference>
<dbReference type="RefSeq" id="NP_001084036.1">
    <property type="nucleotide sequence ID" value="NM_001090567.1"/>
</dbReference>
<dbReference type="SMR" id="P41154"/>
<dbReference type="GeneID" id="399268"/>
<dbReference type="CTD" id="3297"/>
<dbReference type="Proteomes" id="UP000186698">
    <property type="component" value="Unplaced"/>
</dbReference>
<dbReference type="GO" id="GO:0005634">
    <property type="term" value="C:nucleus"/>
    <property type="evidence" value="ECO:0007669"/>
    <property type="project" value="UniProtKB-SubCell"/>
</dbReference>
<dbReference type="GO" id="GO:0003700">
    <property type="term" value="F:DNA-binding transcription factor activity"/>
    <property type="evidence" value="ECO:0007669"/>
    <property type="project" value="InterPro"/>
</dbReference>
<dbReference type="GO" id="GO:0043565">
    <property type="term" value="F:sequence-specific DNA binding"/>
    <property type="evidence" value="ECO:0007669"/>
    <property type="project" value="InterPro"/>
</dbReference>
<dbReference type="FunFam" id="1.10.10.10:FF:000027">
    <property type="entry name" value="Heat shock transcription factor 1"/>
    <property type="match status" value="1"/>
</dbReference>
<dbReference type="Gene3D" id="1.10.10.10">
    <property type="entry name" value="Winged helix-like DNA-binding domain superfamily/Winged helix DNA-binding domain"/>
    <property type="match status" value="1"/>
</dbReference>
<dbReference type="InterPro" id="IPR000232">
    <property type="entry name" value="HSF_DNA-bd"/>
</dbReference>
<dbReference type="InterPro" id="IPR010542">
    <property type="entry name" value="Vert_HSTF_C"/>
</dbReference>
<dbReference type="InterPro" id="IPR036388">
    <property type="entry name" value="WH-like_DNA-bd_sf"/>
</dbReference>
<dbReference type="InterPro" id="IPR036390">
    <property type="entry name" value="WH_DNA-bd_sf"/>
</dbReference>
<dbReference type="PANTHER" id="PTHR10015:SF274">
    <property type="entry name" value="HEAT SHOCK FACTOR PROTEIN 1"/>
    <property type="match status" value="1"/>
</dbReference>
<dbReference type="PANTHER" id="PTHR10015">
    <property type="entry name" value="HEAT SHOCK TRANSCRIPTION FACTOR"/>
    <property type="match status" value="1"/>
</dbReference>
<dbReference type="Pfam" id="PF00447">
    <property type="entry name" value="HSF_DNA-bind"/>
    <property type="match status" value="1"/>
</dbReference>
<dbReference type="Pfam" id="PF06546">
    <property type="entry name" value="Vert_HS_TF"/>
    <property type="match status" value="1"/>
</dbReference>
<dbReference type="PRINTS" id="PR00056">
    <property type="entry name" value="HSFDOMAIN"/>
</dbReference>
<dbReference type="SMART" id="SM00415">
    <property type="entry name" value="HSF"/>
    <property type="match status" value="1"/>
</dbReference>
<dbReference type="SUPFAM" id="SSF46785">
    <property type="entry name" value="Winged helix' DNA-binding domain"/>
    <property type="match status" value="1"/>
</dbReference>
<dbReference type="PROSITE" id="PS00434">
    <property type="entry name" value="HSF_DOMAIN"/>
    <property type="match status" value="1"/>
</dbReference>
<protein>
    <recommendedName>
        <fullName>Heat shock factor protein</fullName>
        <shortName>HSF</shortName>
    </recommendedName>
    <alternativeName>
        <fullName>Heat shock transcription factor</fullName>
        <shortName>HSTF</shortName>
    </alternativeName>
</protein>
<comment type="function">
    <text evidence="1">DNA-binding protein that specifically binds heat shock promoter elements (HSE) and activates transcription.</text>
</comment>
<comment type="subunit">
    <text>Homotrimer.</text>
</comment>
<comment type="subcellular location">
    <subcellularLocation>
        <location>Nucleus</location>
    </subcellularLocation>
</comment>
<comment type="PTM">
    <text evidence="1">Exhibits temperature-dependent phosphorylation.</text>
</comment>
<comment type="similarity">
    <text evidence="3">Belongs to the HSF family.</text>
</comment>